<reference key="1">
    <citation type="journal article" date="2007" name="Photosyn. Res.">
        <title>Complete nucleotide sequence of the freshwater unicellular cyanobacterium Synechococcus elongatus PCC 6301 chromosome: gene content and organization.</title>
        <authorList>
            <person name="Sugita C."/>
            <person name="Ogata K."/>
            <person name="Shikata M."/>
            <person name="Jikuya H."/>
            <person name="Takano J."/>
            <person name="Furumichi M."/>
            <person name="Kanehisa M."/>
            <person name="Omata T."/>
            <person name="Sugiura M."/>
            <person name="Sugita M."/>
        </authorList>
    </citation>
    <scope>NUCLEOTIDE SEQUENCE [LARGE SCALE GENOMIC DNA]</scope>
    <source>
        <strain>ATCC 27144 / PCC 6301 / SAUG 1402/1</strain>
    </source>
</reference>
<sequence length="67" mass="7620">MAQRTRLGDILRPLNSEYGKVAPGWGTTPVMGVFMLLFFVFLLIILQIYNSSLVLDTFKVDWRSLGL</sequence>
<comment type="function">
    <text evidence="1">One of the components of the core complex of photosystem II (PSII), required for its stability and/or assembly. PSII is a light-driven water:plastoquinone oxidoreductase that uses light energy to abstract electrons from H(2)O, generating O(2) and a proton gradient subsequently used for ATP formation. It consists of a core antenna complex that captures photons, and an electron transfer chain that converts photonic excitation into a charge separation.</text>
</comment>
<comment type="subunit">
    <text evidence="1">PSII is composed of 1 copy each of membrane proteins PsbA, PsbB, PsbC, PsbD, PsbE, PsbF, PsbH, PsbI, PsbJ, PsbK, PsbL, PsbM, PsbT, PsbX, PsbY, PsbZ, Psb30/Ycf12, peripheral proteins PsbO, CyanoQ (PsbQ), PsbU, PsbV and a large number of cofactors. It forms dimeric complexes.</text>
</comment>
<comment type="subcellular location">
    <subcellularLocation>
        <location evidence="1">Cellular thylakoid membrane</location>
        <topology evidence="1">Single-pass membrane protein</topology>
    </subcellularLocation>
</comment>
<comment type="similarity">
    <text evidence="1">Belongs to the PsbH family.</text>
</comment>
<accession>Q5N2J2</accession>
<evidence type="ECO:0000255" key="1">
    <source>
        <dbReference type="HAMAP-Rule" id="MF_00752"/>
    </source>
</evidence>
<dbReference type="EMBL" id="AP008231">
    <property type="protein sequence ID" value="BAD79478.1"/>
    <property type="molecule type" value="Genomic_DNA"/>
</dbReference>
<dbReference type="RefSeq" id="WP_011243600.1">
    <property type="nucleotide sequence ID" value="NZ_CP085785.1"/>
</dbReference>
<dbReference type="SMR" id="Q5N2J2"/>
<dbReference type="GeneID" id="72429039"/>
<dbReference type="KEGG" id="syc:syc1288_c"/>
<dbReference type="eggNOG" id="ENOG50332MV">
    <property type="taxonomic scope" value="Bacteria"/>
</dbReference>
<dbReference type="Proteomes" id="UP000001175">
    <property type="component" value="Chromosome"/>
</dbReference>
<dbReference type="GO" id="GO:0009523">
    <property type="term" value="C:photosystem II"/>
    <property type="evidence" value="ECO:0007669"/>
    <property type="project" value="UniProtKB-KW"/>
</dbReference>
<dbReference type="GO" id="GO:0031676">
    <property type="term" value="C:plasma membrane-derived thylakoid membrane"/>
    <property type="evidence" value="ECO:0007669"/>
    <property type="project" value="UniProtKB-SubCell"/>
</dbReference>
<dbReference type="GO" id="GO:0042301">
    <property type="term" value="F:phosphate ion binding"/>
    <property type="evidence" value="ECO:0007669"/>
    <property type="project" value="InterPro"/>
</dbReference>
<dbReference type="GO" id="GO:0015979">
    <property type="term" value="P:photosynthesis"/>
    <property type="evidence" value="ECO:0007669"/>
    <property type="project" value="UniProtKB-UniRule"/>
</dbReference>
<dbReference type="GO" id="GO:0050821">
    <property type="term" value="P:protein stabilization"/>
    <property type="evidence" value="ECO:0007669"/>
    <property type="project" value="InterPro"/>
</dbReference>
<dbReference type="Gene3D" id="1.20.5.880">
    <property type="entry name" value="Photosystem II reaction center protein H"/>
    <property type="match status" value="1"/>
</dbReference>
<dbReference type="HAMAP" id="MF_00752">
    <property type="entry name" value="PSII_PsbH"/>
    <property type="match status" value="1"/>
</dbReference>
<dbReference type="InterPro" id="IPR001056">
    <property type="entry name" value="PSII_PsbH"/>
</dbReference>
<dbReference type="InterPro" id="IPR036863">
    <property type="entry name" value="PSII_PsbH_sf"/>
</dbReference>
<dbReference type="NCBIfam" id="NF002728">
    <property type="entry name" value="PRK02624.1"/>
    <property type="match status" value="1"/>
</dbReference>
<dbReference type="PANTHER" id="PTHR34469">
    <property type="entry name" value="PHOTOSYSTEM II REACTION CENTER PROTEIN H"/>
    <property type="match status" value="1"/>
</dbReference>
<dbReference type="PANTHER" id="PTHR34469:SF4">
    <property type="entry name" value="PHOTOSYSTEM II REACTION CENTER PROTEIN H"/>
    <property type="match status" value="1"/>
</dbReference>
<dbReference type="Pfam" id="PF00737">
    <property type="entry name" value="PsbH"/>
    <property type="match status" value="1"/>
</dbReference>
<dbReference type="SUPFAM" id="SSF161025">
    <property type="entry name" value="Photosystem II 10 kDa phosphoprotein PsbH"/>
    <property type="match status" value="1"/>
</dbReference>
<proteinExistence type="inferred from homology"/>
<protein>
    <recommendedName>
        <fullName evidence="1">Photosystem II reaction center protein H</fullName>
        <shortName evidence="1">PSII-H</shortName>
    </recommendedName>
</protein>
<gene>
    <name evidence="1" type="primary">psbH</name>
    <name type="ordered locus">syc1288_c</name>
</gene>
<keyword id="KW-0472">Membrane</keyword>
<keyword id="KW-0602">Photosynthesis</keyword>
<keyword id="KW-0604">Photosystem II</keyword>
<keyword id="KW-0793">Thylakoid</keyword>
<keyword id="KW-0812">Transmembrane</keyword>
<keyword id="KW-1133">Transmembrane helix</keyword>
<feature type="chain" id="PRO_0000070547" description="Photosystem II reaction center protein H">
    <location>
        <begin position="1"/>
        <end position="67"/>
    </location>
</feature>
<feature type="transmembrane region" description="Helical" evidence="1">
    <location>
        <begin position="29"/>
        <end position="49"/>
    </location>
</feature>
<organism>
    <name type="scientific">Synechococcus sp. (strain ATCC 27144 / PCC 6301 / SAUG 1402/1)</name>
    <name type="common">Anacystis nidulans</name>
    <dbReference type="NCBI Taxonomy" id="269084"/>
    <lineage>
        <taxon>Bacteria</taxon>
        <taxon>Bacillati</taxon>
        <taxon>Cyanobacteriota</taxon>
        <taxon>Cyanophyceae</taxon>
        <taxon>Synechococcales</taxon>
        <taxon>Synechococcaceae</taxon>
        <taxon>Synechococcus</taxon>
    </lineage>
</organism>
<name>PSBH_SYNP6</name>